<proteinExistence type="evidence at protein level"/>
<keyword id="KW-0010">Activator</keyword>
<keyword id="KW-0217">Developmental protein</keyword>
<keyword id="KW-0238">DNA-binding</keyword>
<keyword id="KW-0539">Nucleus</keyword>
<keyword id="KW-1185">Reference proteome</keyword>
<keyword id="KW-0804">Transcription</keyword>
<keyword id="KW-0805">Transcription regulation</keyword>
<evidence type="ECO:0000250" key="1">
    <source>
        <dbReference type="UniProtKB" id="O43435"/>
    </source>
</evidence>
<evidence type="ECO:0000250" key="2">
    <source>
        <dbReference type="UniProtKB" id="P70323"/>
    </source>
</evidence>
<evidence type="ECO:0000255" key="3">
    <source>
        <dbReference type="PROSITE-ProRule" id="PRU00201"/>
    </source>
</evidence>
<evidence type="ECO:0000256" key="4">
    <source>
        <dbReference type="SAM" id="MobiDB-lite"/>
    </source>
</evidence>
<evidence type="ECO:0000269" key="5">
    <source>
    </source>
</evidence>
<evidence type="ECO:0000269" key="6">
    <source>
    </source>
</evidence>
<evidence type="ECO:0000269" key="7">
    <source>
    </source>
</evidence>
<dbReference type="EMBL" id="AF526274">
    <property type="protein sequence ID" value="AAN77134.1"/>
    <property type="molecule type" value="mRNA"/>
</dbReference>
<dbReference type="SMR" id="Q8AX98"/>
<dbReference type="GeneID" id="399188"/>
<dbReference type="KEGG" id="xla:399188"/>
<dbReference type="AGR" id="Xenbase:XB-GENE-6254396"/>
<dbReference type="CTD" id="399188"/>
<dbReference type="Xenbase" id="XB-GENE-6254396">
    <property type="gene designation" value="tbx1.S"/>
</dbReference>
<dbReference type="OrthoDB" id="7442607at2759"/>
<dbReference type="Proteomes" id="UP000186698">
    <property type="component" value="Chromosome 1S"/>
</dbReference>
<dbReference type="Bgee" id="399188">
    <property type="expression patterns" value="Expressed in internal ear and 8 other cell types or tissues"/>
</dbReference>
<dbReference type="GO" id="GO:0000785">
    <property type="term" value="C:chromatin"/>
    <property type="evidence" value="ECO:0000318"/>
    <property type="project" value="GO_Central"/>
</dbReference>
<dbReference type="GO" id="GO:0005634">
    <property type="term" value="C:nucleus"/>
    <property type="evidence" value="ECO:0000318"/>
    <property type="project" value="GO_Central"/>
</dbReference>
<dbReference type="GO" id="GO:0003700">
    <property type="term" value="F:DNA-binding transcription factor activity"/>
    <property type="evidence" value="ECO:0000314"/>
    <property type="project" value="UniProtKB"/>
</dbReference>
<dbReference type="GO" id="GO:0000981">
    <property type="term" value="F:DNA-binding transcription factor activity, RNA polymerase II-specific"/>
    <property type="evidence" value="ECO:0000318"/>
    <property type="project" value="GO_Central"/>
</dbReference>
<dbReference type="GO" id="GO:0000978">
    <property type="term" value="F:RNA polymerase II cis-regulatory region sequence-specific DNA binding"/>
    <property type="evidence" value="ECO:0000318"/>
    <property type="project" value="GO_Central"/>
</dbReference>
<dbReference type="GO" id="GO:0001708">
    <property type="term" value="P:cell fate specification"/>
    <property type="evidence" value="ECO:0000318"/>
    <property type="project" value="GO_Central"/>
</dbReference>
<dbReference type="GO" id="GO:0071300">
    <property type="term" value="P:cellular response to retinoic acid"/>
    <property type="evidence" value="ECO:0000314"/>
    <property type="project" value="UniProtKB"/>
</dbReference>
<dbReference type="GO" id="GO:0060788">
    <property type="term" value="P:ectodermal placode formation"/>
    <property type="evidence" value="ECO:0000315"/>
    <property type="project" value="UniProtKB"/>
</dbReference>
<dbReference type="GO" id="GO:0045944">
    <property type="term" value="P:positive regulation of transcription by RNA polymerase II"/>
    <property type="evidence" value="ECO:0000314"/>
    <property type="project" value="UniProtKB"/>
</dbReference>
<dbReference type="GO" id="GO:0050793">
    <property type="term" value="P:regulation of developmental process"/>
    <property type="evidence" value="ECO:0000315"/>
    <property type="project" value="UniProtKB"/>
</dbReference>
<dbReference type="GO" id="GO:0006357">
    <property type="term" value="P:regulation of transcription by RNA polymerase II"/>
    <property type="evidence" value="ECO:0000318"/>
    <property type="project" value="GO_Central"/>
</dbReference>
<dbReference type="CDD" id="cd20187">
    <property type="entry name" value="T-box_TBX1_10-like"/>
    <property type="match status" value="1"/>
</dbReference>
<dbReference type="FunFam" id="2.60.40.820:FF:000006">
    <property type="entry name" value="T-box transcription factor"/>
    <property type="match status" value="1"/>
</dbReference>
<dbReference type="Gene3D" id="2.60.40.820">
    <property type="entry name" value="Transcription factor, T-box"/>
    <property type="match status" value="1"/>
</dbReference>
<dbReference type="InterPro" id="IPR008967">
    <property type="entry name" value="p53-like_TF_DNA-bd_sf"/>
</dbReference>
<dbReference type="InterPro" id="IPR046360">
    <property type="entry name" value="T-box_DNA-bd"/>
</dbReference>
<dbReference type="InterPro" id="IPR036960">
    <property type="entry name" value="T-box_sf"/>
</dbReference>
<dbReference type="InterPro" id="IPR001699">
    <property type="entry name" value="TF_T-box"/>
</dbReference>
<dbReference type="InterPro" id="IPR018186">
    <property type="entry name" value="TF_T-box_CS"/>
</dbReference>
<dbReference type="PANTHER" id="PTHR11267">
    <property type="entry name" value="T-BOX PROTEIN-RELATED"/>
    <property type="match status" value="1"/>
</dbReference>
<dbReference type="PANTHER" id="PTHR11267:SF104">
    <property type="entry name" value="T-BOX TRANSCRIPTION FACTOR TBX1"/>
    <property type="match status" value="1"/>
</dbReference>
<dbReference type="Pfam" id="PF00907">
    <property type="entry name" value="T-box"/>
    <property type="match status" value="1"/>
</dbReference>
<dbReference type="PRINTS" id="PR00937">
    <property type="entry name" value="TBOX"/>
</dbReference>
<dbReference type="SMART" id="SM00425">
    <property type="entry name" value="TBOX"/>
    <property type="match status" value="1"/>
</dbReference>
<dbReference type="SUPFAM" id="SSF49417">
    <property type="entry name" value="p53-like transcription factors"/>
    <property type="match status" value="1"/>
</dbReference>
<dbReference type="PROSITE" id="PS01283">
    <property type="entry name" value="TBOX_1"/>
    <property type="match status" value="1"/>
</dbReference>
<dbReference type="PROSITE" id="PS01264">
    <property type="entry name" value="TBOX_2"/>
    <property type="match status" value="1"/>
</dbReference>
<dbReference type="PROSITE" id="PS50252">
    <property type="entry name" value="TBOX_3"/>
    <property type="match status" value="1"/>
</dbReference>
<feature type="chain" id="PRO_0000262460" description="T-box transcription factor TBX1-A">
    <location>
        <begin position="1"/>
        <end position="463"/>
    </location>
</feature>
<feature type="DNA-binding region" description="T-box" evidence="3">
    <location>
        <begin position="119"/>
        <end position="297"/>
    </location>
</feature>
<feature type="region of interest" description="Disordered" evidence="4">
    <location>
        <begin position="39"/>
        <end position="58"/>
    </location>
</feature>
<feature type="region of interest" description="Disordered" evidence="4">
    <location>
        <begin position="75"/>
        <end position="104"/>
    </location>
</feature>
<feature type="region of interest" description="Disordered" evidence="4">
    <location>
        <begin position="320"/>
        <end position="354"/>
    </location>
</feature>
<feature type="region of interest" description="Disordered" evidence="4">
    <location>
        <begin position="377"/>
        <end position="409"/>
    </location>
</feature>
<feature type="short sequence motif" description="Nuclear localization signal" evidence="2">
    <location>
        <begin position="420"/>
        <end position="431"/>
    </location>
</feature>
<feature type="compositionally biased region" description="Low complexity" evidence="4">
    <location>
        <begin position="75"/>
        <end position="96"/>
    </location>
</feature>
<feature type="compositionally biased region" description="Polar residues" evidence="4">
    <location>
        <begin position="323"/>
        <end position="332"/>
    </location>
</feature>
<feature type="compositionally biased region" description="Basic and acidic residues" evidence="4">
    <location>
        <begin position="333"/>
        <end position="347"/>
    </location>
</feature>
<gene>
    <name type="primary">tbx1-a</name>
</gene>
<protein>
    <recommendedName>
        <fullName>T-box transcription factor TBX1-A</fullName>
        <shortName>T-box protein 1-A</shortName>
    </recommendedName>
</protein>
<comment type="function">
    <text evidence="1 2 5 7">Probable transcriptional regulator involved in developmental processes (By similarity). Binds to the palindromic T site 5'-TTCACACCTAGGTGTGAA-3' DNA sequence (By similarity). Induces pre-placodal ectoderm (PPE) gene expression in regions where RIPPLY3 is absent. Plays a role in the formation of the anteroposterior (AP) axis during embryonic development; required to establish the posterolateral border of the pre-placodal ectoderm (PPE) acting downstream of the retinoic acid receptor (RAR) signaling.</text>
</comment>
<comment type="subunit">
    <text evidence="1 6">Binds DNA as a dimer (By similarity). Interacts with dscr6/ripply3 (PubMed:19247927).</text>
</comment>
<comment type="subcellular location">
    <subcellularLocation>
        <location evidence="3">Nucleus</location>
    </subcellularLocation>
</comment>
<comment type="developmental stage">
    <text evidence="5 7">First detected shortly after the mid-blastula transition and is localized to the presumptive mesoderm at mid-gastrula stages. Expression persists in the lateral plate mesoderm at neurula stages and is found in the pharyngeal arches and otic vesicles from early tail bud stages onward. Expressed in the pre-placodal ectoderm domain at stage 18.</text>
</comment>
<comment type="induction">
    <text evidence="7">Up-regulated by retinoc acid (RA) in the pre-placodal ectoderm (PPE) during post-gastrulation development. Up-regulated by retinoc acid (RA) before, but inhibited after, neurogenesis development.</text>
</comment>
<comment type="domain">
    <text evidence="5">The C-terminus acts as a transcriptional activation domain.</text>
</comment>
<reference key="1">
    <citation type="journal article" date="2005" name="Dev. Dyn.">
        <title>XTbx1 is a transcriptional activator involved in head and pharyngeal arch development in Xenopus laevis.</title>
        <authorList>
            <person name="Ataliotis P."/>
            <person name="Ivins S."/>
            <person name="Mohun T.J."/>
            <person name="Scambler P.J."/>
        </authorList>
    </citation>
    <scope>NUCLEOTIDE SEQUENCE [MRNA]</scope>
    <scope>FUNCTION</scope>
    <scope>DOMAIN</scope>
    <scope>DEVELOPMENTAL STAGE</scope>
</reference>
<reference key="2">
    <citation type="journal article" date="2009" name="Int. J. Dev. Biol.">
        <title>The Xenopus Bowline/Ripply family proteins negatively regulate the transcriptional activity of T-box transcription factors.</title>
        <authorList>
            <person name="Hitachi K."/>
            <person name="Danno H."/>
            <person name="Tazumi S."/>
            <person name="Aihara Y."/>
            <person name="Uchiyama H."/>
            <person name="Okabayashi K."/>
            <person name="Kondow A."/>
            <person name="Asashima M."/>
        </authorList>
    </citation>
    <scope>INTERACTION WITH DSCR6</scope>
</reference>
<reference key="3">
    <citation type="journal article" date="2012" name="Development">
        <title>RIPPLY3 is a retinoic acid-inducible repressor required for setting the borders of the pre-placodal ectoderm.</title>
        <authorList>
            <person name="Janesick A."/>
            <person name="Shiotsugu J."/>
            <person name="Taketani M."/>
            <person name="Blumberg B."/>
        </authorList>
    </citation>
    <scope>FUNCTION</scope>
    <scope>INDUCTION</scope>
    <scope>DEVELOPMENTAL STAGE</scope>
</reference>
<name>TBX1A_XENLA</name>
<accession>Q8AX98</accession>
<organism>
    <name type="scientific">Xenopus laevis</name>
    <name type="common">African clawed frog</name>
    <dbReference type="NCBI Taxonomy" id="8355"/>
    <lineage>
        <taxon>Eukaryota</taxon>
        <taxon>Metazoa</taxon>
        <taxon>Chordata</taxon>
        <taxon>Craniata</taxon>
        <taxon>Vertebrata</taxon>
        <taxon>Euteleostomi</taxon>
        <taxon>Amphibia</taxon>
        <taxon>Batrachia</taxon>
        <taxon>Anura</taxon>
        <taxon>Pipoidea</taxon>
        <taxon>Pipidae</taxon>
        <taxon>Xenopodinae</taxon>
        <taxon>Xenopus</taxon>
        <taxon>Xenopus</taxon>
    </lineage>
</organism>
<sequence length="463" mass="51290">MISAISSPWLTQLSHFCDVAAFTANSLSSLNATGGYHLSPSPGDPYSQHEPHYEPCSASQHSYSFGHACPEPESGASSSSCASSTPGSGSTGSSSSNKAPVKKNPKVANINVQLEMKALWDEFNQLGTEMIVTKAGRRMFPTFQVKIFGMDPMADYMLLMDFVPVDDKRYRYAFHSSSWLVAGKADPATPGRVHYHPDSPAKGAQWMKQIVSFDKLKLTNNLLDDNGHIILNSMHRYQPRFHVVYVDPRKDSEKYAEENFKTFVFEETRFTAVTAYQNHRITQLKIASNPFAKGFRDCDPEDWPRNHRPGSLPLMNAFARSRNPVSSPTQNGSDKDGDGRREYERDASGTPLHGDAAHQQLMSRVLSLSLPVPGGLVPLSTGRPSPPHELRLDPHSQGSEPLHHHPYKYPTSYDRYLGAKTRPAPYPLPTIRGHGYHHHHMNPAAANMYSGAGAPGSYEYGPR</sequence>